<accession>A7MQE0</accession>
<sequence length="133" mass="15058">MAKEFGRPQRVAQEMQKEIAIILQREIKDPRVGLMTTVSGVEVSRDLAYAKVFVTFLNDKDEAAVKAGIKALQDASGFIRSLLGKAMRLRIVPELTFFYDNSLVEGMRMSNLVTSVVKHDEERRVNPDDDKEE</sequence>
<evidence type="ECO:0000255" key="1">
    <source>
        <dbReference type="HAMAP-Rule" id="MF_00003"/>
    </source>
</evidence>
<evidence type="ECO:0000305" key="2"/>
<proteinExistence type="inferred from homology"/>
<reference key="1">
    <citation type="journal article" date="2010" name="PLoS ONE">
        <title>Genome sequence of Cronobacter sakazakii BAA-894 and comparative genomic hybridization analysis with other Cronobacter species.</title>
        <authorList>
            <person name="Kucerova E."/>
            <person name="Clifton S.W."/>
            <person name="Xia X.Q."/>
            <person name="Long F."/>
            <person name="Porwollik S."/>
            <person name="Fulton L."/>
            <person name="Fronick C."/>
            <person name="Minx P."/>
            <person name="Kyung K."/>
            <person name="Warren W."/>
            <person name="Fulton R."/>
            <person name="Feng D."/>
            <person name="Wollam A."/>
            <person name="Shah N."/>
            <person name="Bhonagiri V."/>
            <person name="Nash W.E."/>
            <person name="Hallsworth-Pepin K."/>
            <person name="Wilson R.K."/>
            <person name="McClelland M."/>
            <person name="Forsythe S.J."/>
        </authorList>
    </citation>
    <scope>NUCLEOTIDE SEQUENCE [LARGE SCALE GENOMIC DNA]</scope>
    <source>
        <strain>ATCC BAA-894</strain>
    </source>
</reference>
<gene>
    <name evidence="1" type="primary">rbfA</name>
    <name type="ordered locus">ESA_03560</name>
</gene>
<protein>
    <recommendedName>
        <fullName evidence="1">Ribosome-binding factor A</fullName>
    </recommendedName>
</protein>
<keyword id="KW-0963">Cytoplasm</keyword>
<keyword id="KW-1185">Reference proteome</keyword>
<keyword id="KW-0690">Ribosome biogenesis</keyword>
<comment type="function">
    <text evidence="1">One of several proteins that assist in the late maturation steps of the functional core of the 30S ribosomal subunit. Associates with free 30S ribosomal subunits (but not with 30S subunits that are part of 70S ribosomes or polysomes). Required for efficient processing of 16S rRNA. May interact with the 5'-terminal helix region of 16S rRNA.</text>
</comment>
<comment type="subunit">
    <text evidence="1">Monomer. Binds 30S ribosomal subunits, but not 50S ribosomal subunits or 70S ribosomes.</text>
</comment>
<comment type="subcellular location">
    <subcellularLocation>
        <location evidence="1">Cytoplasm</location>
    </subcellularLocation>
</comment>
<comment type="similarity">
    <text evidence="1">Belongs to the RbfA family.</text>
</comment>
<comment type="sequence caution" evidence="2">
    <conflict type="erroneous initiation">
        <sequence resource="EMBL-CDS" id="ABU78773"/>
    </conflict>
    <text>Extended N-terminus.</text>
</comment>
<dbReference type="EMBL" id="CP000783">
    <property type="protein sequence ID" value="ABU78773.1"/>
    <property type="status" value="ALT_INIT"/>
    <property type="molecule type" value="Genomic_DNA"/>
</dbReference>
<dbReference type="RefSeq" id="WP_004385058.1">
    <property type="nucleotide sequence ID" value="NC_009778.1"/>
</dbReference>
<dbReference type="SMR" id="A7MQE0"/>
<dbReference type="GeneID" id="56732217"/>
<dbReference type="KEGG" id="esa:ESA_03560"/>
<dbReference type="HOGENOM" id="CLU_089475_5_0_6"/>
<dbReference type="Proteomes" id="UP000000260">
    <property type="component" value="Chromosome"/>
</dbReference>
<dbReference type="GO" id="GO:0005829">
    <property type="term" value="C:cytosol"/>
    <property type="evidence" value="ECO:0007669"/>
    <property type="project" value="TreeGrafter"/>
</dbReference>
<dbReference type="GO" id="GO:0043024">
    <property type="term" value="F:ribosomal small subunit binding"/>
    <property type="evidence" value="ECO:0007669"/>
    <property type="project" value="TreeGrafter"/>
</dbReference>
<dbReference type="GO" id="GO:0030490">
    <property type="term" value="P:maturation of SSU-rRNA"/>
    <property type="evidence" value="ECO:0007669"/>
    <property type="project" value="UniProtKB-UniRule"/>
</dbReference>
<dbReference type="FunFam" id="3.30.300.20:FF:000007">
    <property type="entry name" value="Ribosome-binding factor A"/>
    <property type="match status" value="1"/>
</dbReference>
<dbReference type="Gene3D" id="3.30.300.20">
    <property type="match status" value="1"/>
</dbReference>
<dbReference type="HAMAP" id="MF_00003">
    <property type="entry name" value="RbfA"/>
    <property type="match status" value="1"/>
</dbReference>
<dbReference type="InterPro" id="IPR015946">
    <property type="entry name" value="KH_dom-like_a/b"/>
</dbReference>
<dbReference type="InterPro" id="IPR000238">
    <property type="entry name" value="RbfA"/>
</dbReference>
<dbReference type="InterPro" id="IPR023799">
    <property type="entry name" value="RbfA_dom_sf"/>
</dbReference>
<dbReference type="InterPro" id="IPR020053">
    <property type="entry name" value="Ribosome-bd_factorA_CS"/>
</dbReference>
<dbReference type="NCBIfam" id="TIGR00082">
    <property type="entry name" value="rbfA"/>
    <property type="match status" value="1"/>
</dbReference>
<dbReference type="PANTHER" id="PTHR33515">
    <property type="entry name" value="RIBOSOME-BINDING FACTOR A, CHLOROPLASTIC-RELATED"/>
    <property type="match status" value="1"/>
</dbReference>
<dbReference type="PANTHER" id="PTHR33515:SF1">
    <property type="entry name" value="RIBOSOME-BINDING FACTOR A, CHLOROPLASTIC-RELATED"/>
    <property type="match status" value="1"/>
</dbReference>
<dbReference type="Pfam" id="PF02033">
    <property type="entry name" value="RBFA"/>
    <property type="match status" value="1"/>
</dbReference>
<dbReference type="SUPFAM" id="SSF89919">
    <property type="entry name" value="Ribosome-binding factor A, RbfA"/>
    <property type="match status" value="1"/>
</dbReference>
<dbReference type="PROSITE" id="PS01319">
    <property type="entry name" value="RBFA"/>
    <property type="match status" value="1"/>
</dbReference>
<feature type="chain" id="PRO_0000321219" description="Ribosome-binding factor A">
    <location>
        <begin position="1"/>
        <end position="133"/>
    </location>
</feature>
<name>RBFA_CROS8</name>
<organism>
    <name type="scientific">Cronobacter sakazakii (strain ATCC BAA-894)</name>
    <name type="common">Enterobacter sakazakii</name>
    <dbReference type="NCBI Taxonomy" id="290339"/>
    <lineage>
        <taxon>Bacteria</taxon>
        <taxon>Pseudomonadati</taxon>
        <taxon>Pseudomonadota</taxon>
        <taxon>Gammaproteobacteria</taxon>
        <taxon>Enterobacterales</taxon>
        <taxon>Enterobacteriaceae</taxon>
        <taxon>Cronobacter</taxon>
    </lineage>
</organism>